<sequence length="348" mass="39182">MLNPALEHIETYKVEGGQEAEVKLNQNENPFDLPSWLKDKILDQFRHEPWNRYPDILPYRGMAAYASFLGVKPELVIMSNGSNEMLYTIFMACLGAGRKVLIPEPSFSLYDKLARLQQAGVVEVPMHDDLSFDVDAIIEAARREKVDFIVLSTPNNPTSKSLSHDEIERIVEAADAIVLVDEAYVEFSREQSALDLIDRYPNLIVLRTMSKALALAGMRIGFAIANPELLAEISKPKIPFASSRLAEITLMAVLENYSLVTDAVQYILAERGRIEAELTEIPGIHTFESDTNFLIIRVANASEVFRKLKNAGVLVRNVSGYPLMENCLRFNVGLREENDRLLELLKKL</sequence>
<feature type="chain" id="PRO_0000153344" description="Histidinol-phosphate aminotransferase">
    <location>
        <begin position="1"/>
        <end position="348"/>
    </location>
</feature>
<feature type="modified residue" description="N6-(pyridoxal phosphate)lysine" evidence="1">
    <location>
        <position position="211"/>
    </location>
</feature>
<name>HIS8_CHLTE</name>
<organism>
    <name type="scientific">Chlorobaculum tepidum (strain ATCC 49652 / DSM 12025 / NBRC 103806 / TLS)</name>
    <name type="common">Chlorobium tepidum</name>
    <dbReference type="NCBI Taxonomy" id="194439"/>
    <lineage>
        <taxon>Bacteria</taxon>
        <taxon>Pseudomonadati</taxon>
        <taxon>Chlorobiota</taxon>
        <taxon>Chlorobiia</taxon>
        <taxon>Chlorobiales</taxon>
        <taxon>Chlorobiaceae</taxon>
        <taxon>Chlorobaculum</taxon>
    </lineage>
</organism>
<dbReference type="EC" id="2.6.1.9" evidence="1"/>
<dbReference type="EMBL" id="AE006470">
    <property type="protein sequence ID" value="AAM72486.1"/>
    <property type="molecule type" value="Genomic_DNA"/>
</dbReference>
<dbReference type="RefSeq" id="NP_662144.1">
    <property type="nucleotide sequence ID" value="NC_002932.3"/>
</dbReference>
<dbReference type="SMR" id="Q8KD01"/>
<dbReference type="STRING" id="194439.CT1256"/>
<dbReference type="EnsemblBacteria" id="AAM72486">
    <property type="protein sequence ID" value="AAM72486"/>
    <property type="gene ID" value="CT1256"/>
</dbReference>
<dbReference type="KEGG" id="cte:CT1256"/>
<dbReference type="PATRIC" id="fig|194439.7.peg.1144"/>
<dbReference type="eggNOG" id="COG0079">
    <property type="taxonomic scope" value="Bacteria"/>
</dbReference>
<dbReference type="HOGENOM" id="CLU_017584_3_1_10"/>
<dbReference type="OrthoDB" id="9813612at2"/>
<dbReference type="UniPathway" id="UPA00031">
    <property type="reaction ID" value="UER00012"/>
</dbReference>
<dbReference type="Proteomes" id="UP000001007">
    <property type="component" value="Chromosome"/>
</dbReference>
<dbReference type="GO" id="GO:0004400">
    <property type="term" value="F:histidinol-phosphate transaminase activity"/>
    <property type="evidence" value="ECO:0007669"/>
    <property type="project" value="UniProtKB-UniRule"/>
</dbReference>
<dbReference type="GO" id="GO:0030170">
    <property type="term" value="F:pyridoxal phosphate binding"/>
    <property type="evidence" value="ECO:0007669"/>
    <property type="project" value="InterPro"/>
</dbReference>
<dbReference type="GO" id="GO:0000105">
    <property type="term" value="P:L-histidine biosynthetic process"/>
    <property type="evidence" value="ECO:0007669"/>
    <property type="project" value="UniProtKB-UniRule"/>
</dbReference>
<dbReference type="CDD" id="cd00609">
    <property type="entry name" value="AAT_like"/>
    <property type="match status" value="1"/>
</dbReference>
<dbReference type="Gene3D" id="3.90.1150.10">
    <property type="entry name" value="Aspartate Aminotransferase, domain 1"/>
    <property type="match status" value="1"/>
</dbReference>
<dbReference type="Gene3D" id="3.40.640.10">
    <property type="entry name" value="Type I PLP-dependent aspartate aminotransferase-like (Major domain)"/>
    <property type="match status" value="1"/>
</dbReference>
<dbReference type="HAMAP" id="MF_01023">
    <property type="entry name" value="HisC_aminotrans_2"/>
    <property type="match status" value="1"/>
</dbReference>
<dbReference type="InterPro" id="IPR001917">
    <property type="entry name" value="Aminotrans_II_pyridoxalP_BS"/>
</dbReference>
<dbReference type="InterPro" id="IPR004839">
    <property type="entry name" value="Aminotransferase_I/II_large"/>
</dbReference>
<dbReference type="InterPro" id="IPR005861">
    <property type="entry name" value="HisP_aminotrans"/>
</dbReference>
<dbReference type="InterPro" id="IPR050106">
    <property type="entry name" value="HistidinolP_aminotransfase"/>
</dbReference>
<dbReference type="InterPro" id="IPR015424">
    <property type="entry name" value="PyrdxlP-dep_Trfase"/>
</dbReference>
<dbReference type="InterPro" id="IPR015421">
    <property type="entry name" value="PyrdxlP-dep_Trfase_major"/>
</dbReference>
<dbReference type="InterPro" id="IPR015422">
    <property type="entry name" value="PyrdxlP-dep_Trfase_small"/>
</dbReference>
<dbReference type="NCBIfam" id="TIGR01141">
    <property type="entry name" value="hisC"/>
    <property type="match status" value="1"/>
</dbReference>
<dbReference type="PANTHER" id="PTHR43643:SF6">
    <property type="entry name" value="HISTIDINOL-PHOSPHATE AMINOTRANSFERASE"/>
    <property type="match status" value="1"/>
</dbReference>
<dbReference type="PANTHER" id="PTHR43643">
    <property type="entry name" value="HISTIDINOL-PHOSPHATE AMINOTRANSFERASE 2"/>
    <property type="match status" value="1"/>
</dbReference>
<dbReference type="Pfam" id="PF00155">
    <property type="entry name" value="Aminotran_1_2"/>
    <property type="match status" value="1"/>
</dbReference>
<dbReference type="SUPFAM" id="SSF53383">
    <property type="entry name" value="PLP-dependent transferases"/>
    <property type="match status" value="1"/>
</dbReference>
<dbReference type="PROSITE" id="PS00599">
    <property type="entry name" value="AA_TRANSFER_CLASS_2"/>
    <property type="match status" value="1"/>
</dbReference>
<gene>
    <name evidence="1" type="primary">hisC</name>
    <name type="ordered locus">CT1256</name>
</gene>
<reference key="1">
    <citation type="journal article" date="2002" name="Proc. Natl. Acad. Sci. U.S.A.">
        <title>The complete genome sequence of Chlorobium tepidum TLS, a photosynthetic, anaerobic, green-sulfur bacterium.</title>
        <authorList>
            <person name="Eisen J.A."/>
            <person name="Nelson K.E."/>
            <person name="Paulsen I.T."/>
            <person name="Heidelberg J.F."/>
            <person name="Wu M."/>
            <person name="Dodson R.J."/>
            <person name="DeBoy R.T."/>
            <person name="Gwinn M.L."/>
            <person name="Nelson W.C."/>
            <person name="Haft D.H."/>
            <person name="Hickey E.K."/>
            <person name="Peterson J.D."/>
            <person name="Durkin A.S."/>
            <person name="Kolonay J.F."/>
            <person name="Yang F."/>
            <person name="Holt I.E."/>
            <person name="Umayam L.A."/>
            <person name="Mason T.M."/>
            <person name="Brenner M."/>
            <person name="Shea T.P."/>
            <person name="Parksey D.S."/>
            <person name="Nierman W.C."/>
            <person name="Feldblyum T.V."/>
            <person name="Hansen C.L."/>
            <person name="Craven M.B."/>
            <person name="Radune D."/>
            <person name="Vamathevan J.J."/>
            <person name="Khouri H.M."/>
            <person name="White O."/>
            <person name="Gruber T.M."/>
            <person name="Ketchum K.A."/>
            <person name="Venter J.C."/>
            <person name="Tettelin H."/>
            <person name="Bryant D.A."/>
            <person name="Fraser C.M."/>
        </authorList>
    </citation>
    <scope>NUCLEOTIDE SEQUENCE [LARGE SCALE GENOMIC DNA]</scope>
    <source>
        <strain>ATCC 49652 / DSM 12025 / NBRC 103806 / TLS</strain>
    </source>
</reference>
<comment type="catalytic activity">
    <reaction evidence="1">
        <text>L-histidinol phosphate + 2-oxoglutarate = 3-(imidazol-4-yl)-2-oxopropyl phosphate + L-glutamate</text>
        <dbReference type="Rhea" id="RHEA:23744"/>
        <dbReference type="ChEBI" id="CHEBI:16810"/>
        <dbReference type="ChEBI" id="CHEBI:29985"/>
        <dbReference type="ChEBI" id="CHEBI:57766"/>
        <dbReference type="ChEBI" id="CHEBI:57980"/>
        <dbReference type="EC" id="2.6.1.9"/>
    </reaction>
</comment>
<comment type="cofactor">
    <cofactor evidence="1">
        <name>pyridoxal 5'-phosphate</name>
        <dbReference type="ChEBI" id="CHEBI:597326"/>
    </cofactor>
</comment>
<comment type="pathway">
    <text evidence="1">Amino-acid biosynthesis; L-histidine biosynthesis; L-histidine from 5-phospho-alpha-D-ribose 1-diphosphate: step 7/9.</text>
</comment>
<comment type="subunit">
    <text evidence="1">Homodimer.</text>
</comment>
<comment type="similarity">
    <text evidence="1">Belongs to the class-II pyridoxal-phosphate-dependent aminotransferase family. Histidinol-phosphate aminotransferase subfamily.</text>
</comment>
<evidence type="ECO:0000255" key="1">
    <source>
        <dbReference type="HAMAP-Rule" id="MF_01023"/>
    </source>
</evidence>
<protein>
    <recommendedName>
        <fullName evidence="1">Histidinol-phosphate aminotransferase</fullName>
        <ecNumber evidence="1">2.6.1.9</ecNumber>
    </recommendedName>
    <alternativeName>
        <fullName evidence="1">Imidazole acetol-phosphate transaminase</fullName>
    </alternativeName>
</protein>
<accession>Q8KD01</accession>
<keyword id="KW-0028">Amino-acid biosynthesis</keyword>
<keyword id="KW-0032">Aminotransferase</keyword>
<keyword id="KW-0368">Histidine biosynthesis</keyword>
<keyword id="KW-0663">Pyridoxal phosphate</keyword>
<keyword id="KW-1185">Reference proteome</keyword>
<keyword id="KW-0808">Transferase</keyword>
<proteinExistence type="inferred from homology"/>